<feature type="signal peptide" evidence="2">
    <location>
        <begin position="1"/>
        <end position="20"/>
    </location>
</feature>
<feature type="propeptide" id="PRO_0000415014" evidence="6">
    <location>
        <begin position="21"/>
        <end position="48"/>
    </location>
</feature>
<feature type="peptide" id="PRO_0000415015" description="Conotoxin Cl14c" evidence="3">
    <location>
        <begin position="51"/>
        <end position="67"/>
    </location>
</feature>
<protein>
    <recommendedName>
        <fullName evidence="4">Conotoxin Cl14c</fullName>
    </recommendedName>
    <alternativeName>
        <fullName evidence="4">Conotoxin Cl14.2a</fullName>
    </alternativeName>
</protein>
<comment type="subcellular location">
    <subcellularLocation>
        <location evidence="3">Secreted</location>
    </subcellularLocation>
</comment>
<comment type="tissue specificity">
    <text evidence="6">Expressed by the venom duct.</text>
</comment>
<comment type="domain">
    <text evidence="5">The cysteine framework is XIV (C-C-C-C).</text>
</comment>
<comment type="PTM">
    <text evidence="1">Contains 2 disulfide bonds.</text>
</comment>
<comment type="similarity">
    <text evidence="5">Belongs to the conotoxin L superfamily.</text>
</comment>
<accession>D6C4I9</accession>
<reference key="1">
    <citation type="journal article" date="2010" name="Mol. Phylogenet. Evol.">
        <title>Evolution of Conus peptide toxins: analysis of Conus californicus Reeve, 1844.</title>
        <authorList>
            <person name="Biggs J.S."/>
            <person name="Watkins M."/>
            <person name="Puillandre N."/>
            <person name="Ownby J.P."/>
            <person name="Lopez-Vera E."/>
            <person name="Christensen S."/>
            <person name="Moreno K.J."/>
            <person name="Bernaldez J."/>
            <person name="Licea-Navarro A."/>
            <person name="Corneli P.S."/>
            <person name="Olivera B.M."/>
        </authorList>
    </citation>
    <scope>NUCLEOTIDE SEQUENCE [GENOMIC DNA]</scope>
    <scope>PROTEIN SEQUENCE OF 51-67</scope>
    <scope>SUBCELLULAR LOCATION</scope>
    <source>
        <tissue>Venom</tissue>
    </source>
</reference>
<evidence type="ECO:0000250" key="1"/>
<evidence type="ECO:0000255" key="2"/>
<evidence type="ECO:0000269" key="3">
    <source>
    </source>
</evidence>
<evidence type="ECO:0000303" key="4">
    <source>
    </source>
</evidence>
<evidence type="ECO:0000305" key="5"/>
<evidence type="ECO:0000305" key="6">
    <source>
    </source>
</evidence>
<keyword id="KW-0165">Cleavage on pair of basic residues</keyword>
<keyword id="KW-0903">Direct protein sequencing</keyword>
<keyword id="KW-1015">Disulfide bond</keyword>
<keyword id="KW-0528">Neurotoxin</keyword>
<keyword id="KW-0964">Secreted</keyword>
<keyword id="KW-0732">Signal</keyword>
<keyword id="KW-0800">Toxin</keyword>
<organism>
    <name type="scientific">Californiconus californicus</name>
    <name type="common">California cone</name>
    <name type="synonym">Conus californicus</name>
    <dbReference type="NCBI Taxonomy" id="1736779"/>
    <lineage>
        <taxon>Eukaryota</taxon>
        <taxon>Metazoa</taxon>
        <taxon>Spiralia</taxon>
        <taxon>Lophotrochozoa</taxon>
        <taxon>Mollusca</taxon>
        <taxon>Gastropoda</taxon>
        <taxon>Caenogastropoda</taxon>
        <taxon>Neogastropoda</taxon>
        <taxon>Conoidea</taxon>
        <taxon>Conidae</taxon>
        <taxon>Californiconus</taxon>
    </lineage>
</organism>
<proteinExistence type="evidence at protein level"/>
<name>CLEC_CONCL</name>
<sequence length="67" mass="7391">MNVTVMFLVLLLLTMPLTDGFNIRATNGGELFGPVQRDAGNVLDHGFQRRRECPPWCPTSHCNAGTC</sequence>
<dbReference type="EMBL" id="FJ959131">
    <property type="protein sequence ID" value="ADB93101.1"/>
    <property type="molecule type" value="Genomic_DNA"/>
</dbReference>
<dbReference type="ConoServer" id="4017">
    <property type="toxin name" value="Cal14.2a precursor"/>
</dbReference>
<dbReference type="GO" id="GO:0005576">
    <property type="term" value="C:extracellular region"/>
    <property type="evidence" value="ECO:0007669"/>
    <property type="project" value="UniProtKB-SubCell"/>
</dbReference>
<dbReference type="GO" id="GO:0090729">
    <property type="term" value="F:toxin activity"/>
    <property type="evidence" value="ECO:0007669"/>
    <property type="project" value="UniProtKB-KW"/>
</dbReference>